<proteinExistence type="inferred from homology"/>
<reference key="1">
    <citation type="journal article" date="2008" name="DNA Res.">
        <title>Complete genome sequence and comparative analysis of the wild-type commensal Escherichia coli strain SE11 isolated from a healthy adult.</title>
        <authorList>
            <person name="Oshima K."/>
            <person name="Toh H."/>
            <person name="Ogura Y."/>
            <person name="Sasamoto H."/>
            <person name="Morita H."/>
            <person name="Park S.-H."/>
            <person name="Ooka T."/>
            <person name="Iyoda S."/>
            <person name="Taylor T.D."/>
            <person name="Hayashi T."/>
            <person name="Itoh K."/>
            <person name="Hattori M."/>
        </authorList>
    </citation>
    <scope>NUCLEOTIDE SEQUENCE [LARGE SCALE GENOMIC DNA]</scope>
    <source>
        <strain>SE11</strain>
    </source>
</reference>
<keyword id="KW-0997">Cell inner membrane</keyword>
<keyword id="KW-1003">Cell membrane</keyword>
<keyword id="KW-0472">Membrane</keyword>
<keyword id="KW-0762">Sugar transport</keyword>
<keyword id="KW-0812">Transmembrane</keyword>
<keyword id="KW-1133">Transmembrane helix</keyword>
<keyword id="KW-0813">Transport</keyword>
<name>SOTB_ECOSE</name>
<dbReference type="EMBL" id="AP009240">
    <property type="protein sequence ID" value="BAG77142.1"/>
    <property type="molecule type" value="Genomic_DNA"/>
</dbReference>
<dbReference type="SMR" id="B6IAT1"/>
<dbReference type="KEGG" id="ecy:ECSE_1618"/>
<dbReference type="HOGENOM" id="CLU_001265_61_1_6"/>
<dbReference type="Proteomes" id="UP000008199">
    <property type="component" value="Chromosome"/>
</dbReference>
<dbReference type="GO" id="GO:0005886">
    <property type="term" value="C:plasma membrane"/>
    <property type="evidence" value="ECO:0007669"/>
    <property type="project" value="UniProtKB-SubCell"/>
</dbReference>
<dbReference type="GO" id="GO:0015144">
    <property type="term" value="F:carbohydrate transmembrane transporter activity"/>
    <property type="evidence" value="ECO:0007669"/>
    <property type="project" value="UniProtKB-UniRule"/>
</dbReference>
<dbReference type="CDD" id="cd17324">
    <property type="entry name" value="MFS_NepI_like"/>
    <property type="match status" value="1"/>
</dbReference>
<dbReference type="FunFam" id="1.20.1250.20:FF:000079">
    <property type="entry name" value="Probable sugar efflux transporter"/>
    <property type="match status" value="1"/>
</dbReference>
<dbReference type="Gene3D" id="1.20.1250.20">
    <property type="entry name" value="MFS general substrate transporter like domains"/>
    <property type="match status" value="1"/>
</dbReference>
<dbReference type="HAMAP" id="MF_00517">
    <property type="entry name" value="MFS_SotB"/>
    <property type="match status" value="1"/>
</dbReference>
<dbReference type="InterPro" id="IPR011701">
    <property type="entry name" value="MFS"/>
</dbReference>
<dbReference type="InterPro" id="IPR020846">
    <property type="entry name" value="MFS_dom"/>
</dbReference>
<dbReference type="InterPro" id="IPR050189">
    <property type="entry name" value="MFS_Efflux_Transporters"/>
</dbReference>
<dbReference type="InterPro" id="IPR036259">
    <property type="entry name" value="MFS_trans_sf"/>
</dbReference>
<dbReference type="InterPro" id="IPR023495">
    <property type="entry name" value="Sugar_effux_transptr_put"/>
</dbReference>
<dbReference type="NCBIfam" id="NF002921">
    <property type="entry name" value="PRK03545.1"/>
    <property type="match status" value="1"/>
</dbReference>
<dbReference type="PANTHER" id="PTHR43124">
    <property type="entry name" value="PURINE EFFLUX PUMP PBUE"/>
    <property type="match status" value="1"/>
</dbReference>
<dbReference type="PANTHER" id="PTHR43124:SF4">
    <property type="entry name" value="SUGAR EFFLUX TRANSPORTER"/>
    <property type="match status" value="1"/>
</dbReference>
<dbReference type="Pfam" id="PF07690">
    <property type="entry name" value="MFS_1"/>
    <property type="match status" value="1"/>
</dbReference>
<dbReference type="SUPFAM" id="SSF103473">
    <property type="entry name" value="MFS general substrate transporter"/>
    <property type="match status" value="1"/>
</dbReference>
<dbReference type="PROSITE" id="PS50850">
    <property type="entry name" value="MFS"/>
    <property type="match status" value="1"/>
</dbReference>
<organism>
    <name type="scientific">Escherichia coli (strain SE11)</name>
    <dbReference type="NCBI Taxonomy" id="409438"/>
    <lineage>
        <taxon>Bacteria</taxon>
        <taxon>Pseudomonadati</taxon>
        <taxon>Pseudomonadota</taxon>
        <taxon>Gammaproteobacteria</taxon>
        <taxon>Enterobacterales</taxon>
        <taxon>Enterobacteriaceae</taxon>
        <taxon>Escherichia</taxon>
    </lineage>
</organism>
<sequence>MTTNTVSRKVAWLRVVTLAVAAFIFNTTEFVPVGLLSDIAQSFHMQTAQVGIMLTIYAWVVALMSLPFMLMTSQVERRKLLICLFVVFIASHVLSFLSWSFTVLVISRIGVAFAHAIFWSITASLAIRMAPAGKRAQALSLIATGTALAMVLGLPLGRIVGQYFGWRMTFFAIGIGALITLLCLIKLLPLLPSEHSGSLKSLPLLFRRPALMSIYLLTVVVVTAHYTAYSYIEPFVQNIAGFSANFATALLLLLGGAGIIGSVIFGKLGNQYASALVSTAIALLLVCLALLLPAANSEIHLGVLSIFWGIAMMIIGLGMQVKVLALAPDATDVAMALFSGIFNIGIGAGALVGNQVSLHWSMSMIGYVGAVPAFAALIWSIIIFRRWPVTLEEQTQ</sequence>
<protein>
    <recommendedName>
        <fullName evidence="1">Probable sugar efflux transporter</fullName>
    </recommendedName>
</protein>
<comment type="function">
    <text evidence="1">Involved in the efflux of sugars. The physiological role may be the reduction of the intracellular concentration of toxic sugars or sugar metabolites.</text>
</comment>
<comment type="subcellular location">
    <subcellularLocation>
        <location evidence="1">Cell inner membrane</location>
        <topology evidence="1">Multi-pass membrane protein</topology>
    </subcellularLocation>
</comment>
<comment type="similarity">
    <text evidence="1">Belongs to the major facilitator superfamily. SotB (TC 2.A.1.2) family.</text>
</comment>
<evidence type="ECO:0000255" key="1">
    <source>
        <dbReference type="HAMAP-Rule" id="MF_00517"/>
    </source>
</evidence>
<accession>B6IAT1</accession>
<gene>
    <name evidence="1" type="primary">sotB</name>
    <name type="ordered locus">ECSE_1618</name>
</gene>
<feature type="chain" id="PRO_1000127460" description="Probable sugar efflux transporter">
    <location>
        <begin position="1"/>
        <end position="396"/>
    </location>
</feature>
<feature type="transmembrane region" description="Helical" evidence="1">
    <location>
        <begin position="15"/>
        <end position="35"/>
    </location>
</feature>
<feature type="transmembrane region" description="Helical" evidence="1">
    <location>
        <begin position="50"/>
        <end position="70"/>
    </location>
</feature>
<feature type="transmembrane region" description="Helical" evidence="1">
    <location>
        <begin position="81"/>
        <end position="101"/>
    </location>
</feature>
<feature type="transmembrane region" description="Helical" evidence="1">
    <location>
        <begin position="103"/>
        <end position="123"/>
    </location>
</feature>
<feature type="transmembrane region" description="Helical" evidence="1">
    <location>
        <begin position="136"/>
        <end position="156"/>
    </location>
</feature>
<feature type="transmembrane region" description="Helical" evidence="1">
    <location>
        <begin position="170"/>
        <end position="190"/>
    </location>
</feature>
<feature type="transmembrane region" description="Helical" evidence="1">
    <location>
        <begin position="209"/>
        <end position="229"/>
    </location>
</feature>
<feature type="transmembrane region" description="Helical" evidence="1">
    <location>
        <begin position="246"/>
        <end position="266"/>
    </location>
</feature>
<feature type="transmembrane region" description="Helical" evidence="1">
    <location>
        <begin position="275"/>
        <end position="295"/>
    </location>
</feature>
<feature type="transmembrane region" description="Helical" evidence="1">
    <location>
        <begin position="299"/>
        <end position="319"/>
    </location>
</feature>
<feature type="transmembrane region" description="Helical" evidence="1">
    <location>
        <begin position="333"/>
        <end position="353"/>
    </location>
</feature>
<feature type="transmembrane region" description="Helical" evidence="1">
    <location>
        <begin position="364"/>
        <end position="384"/>
    </location>
</feature>